<evidence type="ECO:0000305" key="1"/>
<keyword id="KW-1185">Reference proteome</keyword>
<keyword id="KW-0677">Repeat</keyword>
<comment type="similarity">
    <text evidence="1">Belongs to the PPR family. PCMP-E subfamily.</text>
</comment>
<comment type="sequence caution" evidence="1">
    <conflict type="erroneous gene model prediction">
        <sequence resource="EMBL-CDS" id="AAB61067"/>
    </conflict>
</comment>
<comment type="online information" name="Pentatricopeptide repeat proteins">
    <link uri="https://ppr.plantenergy.uwa.edu.au"/>
</comment>
<accession>O04659</accession>
<sequence length="691" mass="77985">MESSKLLSLLRECTNSTKSLRRIKLVHQRILTLGLRRDVVLCKSLINVYFTCKDHCSARHVFENFDIRSDVYIWNSLMSGYSKNSMFHDTLEVFKRLLNCSICVPDSFTFPNVIKAYGALGREFLGRMIHTLVVKSGYVCDVVVASSLVGMYAKFNLFENSLQVFDEMPERDVASWNTVISCFYQSGEAEKALELFGRMESSGFEPNSVSLTVAISACSRLLWLERGKEIHRKCVKKGFELDEYVNSALVDMYGKCDCLEVAREVFQKMPRKSLVAWNSMIKGYVAKGDSKSCVEILNRMIIEGTRPSQTTLTSILMACSRSRNLLHGKFIHGYVIRSVVNADIYVNCSLIDLYFKCGEANLAETVFSKTQKDVAESWNVMISSYISVGNWFKAVEVYDQMVSVGVKPDVVTFTSVLPACSQLAALEKGKQIHLSISESRLETDELLLSALLDMYSKCGNEKEAFRIFNSIPKKDVVSWTVMISAYGSHGQPREALYQFDEMQKFGLKPDGVTLLAVLSACGHAGLIDEGLKFFSQMRSKYGIEPIIEHYSCMIDILGRAGRLLEAYEIIQQTPETSDNAELLSTLFSACCLHLEHSLGDRIARLLVENYPDDASTYMVLFNLYASGESWDAARRVRLKMKEMGLRKKPGCSWIEMSDKVCHFFAEDRSHLRAENVYECLALLSGHMESGQ</sequence>
<protein>
    <recommendedName>
        <fullName>Pentatricopeptide repeat-containing protein At5g27110</fullName>
    </recommendedName>
</protein>
<proteinExistence type="evidence at transcript level"/>
<feature type="chain" id="PRO_0000363535" description="Pentatricopeptide repeat-containing protein At5g27110">
    <location>
        <begin position="1"/>
        <end position="691"/>
    </location>
</feature>
<feature type="repeat" description="PPR 1">
    <location>
        <begin position="38"/>
        <end position="68"/>
    </location>
</feature>
<feature type="repeat" description="PPR 2">
    <location>
        <begin position="70"/>
        <end position="104"/>
    </location>
</feature>
<feature type="repeat" description="PPR 3">
    <location>
        <begin position="106"/>
        <end position="140"/>
    </location>
</feature>
<feature type="repeat" description="PPR 4">
    <location>
        <begin position="141"/>
        <end position="171"/>
    </location>
</feature>
<feature type="repeat" description="PPR 5">
    <location>
        <begin position="172"/>
        <end position="206"/>
    </location>
</feature>
<feature type="repeat" description="PPR 6">
    <location>
        <begin position="207"/>
        <end position="241"/>
    </location>
</feature>
<feature type="repeat" description="PPR 7">
    <location>
        <begin position="242"/>
        <end position="272"/>
    </location>
</feature>
<feature type="repeat" description="PPR 8">
    <location>
        <begin position="273"/>
        <end position="307"/>
    </location>
</feature>
<feature type="repeat" description="PPR 9">
    <location>
        <begin position="308"/>
        <end position="342"/>
    </location>
</feature>
<feature type="repeat" description="PPR 10">
    <location>
        <begin position="343"/>
        <end position="373"/>
    </location>
</feature>
<feature type="repeat" description="PPR 11">
    <location>
        <begin position="374"/>
        <end position="408"/>
    </location>
</feature>
<feature type="repeat" description="PPR 12">
    <location>
        <begin position="409"/>
        <end position="443"/>
    </location>
</feature>
<feature type="repeat" description="PPR 13">
    <location>
        <begin position="444"/>
        <end position="474"/>
    </location>
</feature>
<feature type="repeat" description="PPR 14">
    <location>
        <begin position="475"/>
        <end position="509"/>
    </location>
</feature>
<feature type="repeat" description="PPR 15">
    <location>
        <begin position="510"/>
        <end position="540"/>
    </location>
</feature>
<feature type="repeat" description="PPR 16">
    <location>
        <begin position="546"/>
        <end position="576"/>
    </location>
</feature>
<feature type="region of interest" description="Type E motif">
    <location>
        <begin position="582"/>
        <end position="657"/>
    </location>
</feature>
<feature type="region of interest" description="Type E(+) motif">
    <location>
        <begin position="658"/>
        <end position="688"/>
    </location>
</feature>
<organism>
    <name type="scientific">Arabidopsis thaliana</name>
    <name type="common">Mouse-ear cress</name>
    <dbReference type="NCBI Taxonomy" id="3702"/>
    <lineage>
        <taxon>Eukaryota</taxon>
        <taxon>Viridiplantae</taxon>
        <taxon>Streptophyta</taxon>
        <taxon>Embryophyta</taxon>
        <taxon>Tracheophyta</taxon>
        <taxon>Spermatophyta</taxon>
        <taxon>Magnoliopsida</taxon>
        <taxon>eudicotyledons</taxon>
        <taxon>Gunneridae</taxon>
        <taxon>Pentapetalae</taxon>
        <taxon>rosids</taxon>
        <taxon>malvids</taxon>
        <taxon>Brassicales</taxon>
        <taxon>Brassicaceae</taxon>
        <taxon>Camelineae</taxon>
        <taxon>Arabidopsis</taxon>
    </lineage>
</organism>
<reference key="1">
    <citation type="journal article" date="2000" name="Nature">
        <title>Sequence and analysis of chromosome 5 of the plant Arabidopsis thaliana.</title>
        <authorList>
            <person name="Tabata S."/>
            <person name="Kaneko T."/>
            <person name="Nakamura Y."/>
            <person name="Kotani H."/>
            <person name="Kato T."/>
            <person name="Asamizu E."/>
            <person name="Miyajima N."/>
            <person name="Sasamoto S."/>
            <person name="Kimura T."/>
            <person name="Hosouchi T."/>
            <person name="Kawashima K."/>
            <person name="Kohara M."/>
            <person name="Matsumoto M."/>
            <person name="Matsuno A."/>
            <person name="Muraki A."/>
            <person name="Nakayama S."/>
            <person name="Nakazaki N."/>
            <person name="Naruo K."/>
            <person name="Okumura S."/>
            <person name="Shinpo S."/>
            <person name="Takeuchi C."/>
            <person name="Wada T."/>
            <person name="Watanabe A."/>
            <person name="Yamada M."/>
            <person name="Yasuda M."/>
            <person name="Sato S."/>
            <person name="de la Bastide M."/>
            <person name="Huang E."/>
            <person name="Spiegel L."/>
            <person name="Gnoj L."/>
            <person name="O'Shaughnessy A."/>
            <person name="Preston R."/>
            <person name="Habermann K."/>
            <person name="Murray J."/>
            <person name="Johnson D."/>
            <person name="Rohlfing T."/>
            <person name="Nelson J."/>
            <person name="Stoneking T."/>
            <person name="Pepin K."/>
            <person name="Spieth J."/>
            <person name="Sekhon M."/>
            <person name="Armstrong J."/>
            <person name="Becker M."/>
            <person name="Belter E."/>
            <person name="Cordum H."/>
            <person name="Cordes M."/>
            <person name="Courtney L."/>
            <person name="Courtney W."/>
            <person name="Dante M."/>
            <person name="Du H."/>
            <person name="Edwards J."/>
            <person name="Fryman J."/>
            <person name="Haakensen B."/>
            <person name="Lamar E."/>
            <person name="Latreille P."/>
            <person name="Leonard S."/>
            <person name="Meyer R."/>
            <person name="Mulvaney E."/>
            <person name="Ozersky P."/>
            <person name="Riley A."/>
            <person name="Strowmatt C."/>
            <person name="Wagner-McPherson C."/>
            <person name="Wollam A."/>
            <person name="Yoakum M."/>
            <person name="Bell M."/>
            <person name="Dedhia N."/>
            <person name="Parnell L."/>
            <person name="Shah R."/>
            <person name="Rodriguez M."/>
            <person name="Hoon See L."/>
            <person name="Vil D."/>
            <person name="Baker J."/>
            <person name="Kirchoff K."/>
            <person name="Toth K."/>
            <person name="King L."/>
            <person name="Bahret A."/>
            <person name="Miller B."/>
            <person name="Marra M.A."/>
            <person name="Martienssen R."/>
            <person name="McCombie W.R."/>
            <person name="Wilson R.K."/>
            <person name="Murphy G."/>
            <person name="Bancroft I."/>
            <person name="Volckaert G."/>
            <person name="Wambutt R."/>
            <person name="Duesterhoeft A."/>
            <person name="Stiekema W."/>
            <person name="Pohl T."/>
            <person name="Entian K.-D."/>
            <person name="Terryn N."/>
            <person name="Hartley N."/>
            <person name="Bent E."/>
            <person name="Johnson S."/>
            <person name="Langham S.-A."/>
            <person name="McCullagh B."/>
            <person name="Robben J."/>
            <person name="Grymonprez B."/>
            <person name="Zimmermann W."/>
            <person name="Ramsperger U."/>
            <person name="Wedler H."/>
            <person name="Balke K."/>
            <person name="Wedler E."/>
            <person name="Peters S."/>
            <person name="van Staveren M."/>
            <person name="Dirkse W."/>
            <person name="Mooijman P."/>
            <person name="Klein Lankhorst R."/>
            <person name="Weitzenegger T."/>
            <person name="Bothe G."/>
            <person name="Rose M."/>
            <person name="Hauf J."/>
            <person name="Berneiser S."/>
            <person name="Hempel S."/>
            <person name="Feldpausch M."/>
            <person name="Lamberth S."/>
            <person name="Villarroel R."/>
            <person name="Gielen J."/>
            <person name="Ardiles W."/>
            <person name="Bents O."/>
            <person name="Lemcke K."/>
            <person name="Kolesov G."/>
            <person name="Mayer K.F.X."/>
            <person name="Rudd S."/>
            <person name="Schoof H."/>
            <person name="Schueller C."/>
            <person name="Zaccaria P."/>
            <person name="Mewes H.-W."/>
            <person name="Bevan M."/>
            <person name="Fransz P.F."/>
        </authorList>
    </citation>
    <scope>NUCLEOTIDE SEQUENCE [LARGE SCALE GENOMIC DNA]</scope>
    <source>
        <strain>cv. Columbia</strain>
    </source>
</reference>
<reference key="2">
    <citation type="journal article" date="2017" name="Plant J.">
        <title>Araport11: a complete reannotation of the Arabidopsis thaliana reference genome.</title>
        <authorList>
            <person name="Cheng C.Y."/>
            <person name="Krishnakumar V."/>
            <person name="Chan A.P."/>
            <person name="Thibaud-Nissen F."/>
            <person name="Schobel S."/>
            <person name="Town C.D."/>
        </authorList>
    </citation>
    <scope>GENOME REANNOTATION</scope>
    <source>
        <strain>cv. Columbia</strain>
    </source>
</reference>
<reference key="3">
    <citation type="journal article" date="2000" name="Plant Mol. Biol.">
        <title>In Arabidopsis thaliana, 1% of the genome codes for a novel protein family unique to plants.</title>
        <authorList>
            <person name="Aubourg S."/>
            <person name="Boudet N."/>
            <person name="Kreis M."/>
            <person name="Lecharny A."/>
        </authorList>
    </citation>
    <scope>GENE FAMILY</scope>
</reference>
<reference key="4">
    <citation type="journal article" date="2004" name="Plant Cell">
        <title>Genome-wide analysis of Arabidopsis pentatricopeptide repeat proteins reveals their essential role in organelle biogenesis.</title>
        <authorList>
            <person name="Lurin C."/>
            <person name="Andres C."/>
            <person name="Aubourg S."/>
            <person name="Bellaoui M."/>
            <person name="Bitton F."/>
            <person name="Bruyere C."/>
            <person name="Caboche M."/>
            <person name="Debast C."/>
            <person name="Gualberto J."/>
            <person name="Hoffmann B."/>
            <person name="Lecharny A."/>
            <person name="Le Ret M."/>
            <person name="Martin-Magniette M.-L."/>
            <person name="Mireau H."/>
            <person name="Peeters N."/>
            <person name="Renou J.-P."/>
            <person name="Szurek B."/>
            <person name="Taconnat L."/>
            <person name="Small I."/>
        </authorList>
    </citation>
    <scope>GENE FAMILY</scope>
</reference>
<dbReference type="EMBL" id="AF007271">
    <property type="protein sequence ID" value="AAB61067.1"/>
    <property type="status" value="ALT_SEQ"/>
    <property type="molecule type" value="Genomic_DNA"/>
</dbReference>
<dbReference type="EMBL" id="CP002688">
    <property type="protein sequence ID" value="AED93651.1"/>
    <property type="molecule type" value="Genomic_DNA"/>
</dbReference>
<dbReference type="PIR" id="T01808">
    <property type="entry name" value="T01808"/>
</dbReference>
<dbReference type="RefSeq" id="NP_198063.1">
    <property type="nucleotide sequence ID" value="NM_122593.2"/>
</dbReference>
<dbReference type="SMR" id="O04659"/>
<dbReference type="FunCoup" id="O04659">
    <property type="interactions" value="16"/>
</dbReference>
<dbReference type="PaxDb" id="3702-AT5G27110.1"/>
<dbReference type="EnsemblPlants" id="AT5G27110.1">
    <property type="protein sequence ID" value="AT5G27110.1"/>
    <property type="gene ID" value="AT5G27110"/>
</dbReference>
<dbReference type="GeneID" id="832769"/>
<dbReference type="Gramene" id="AT5G27110.1">
    <property type="protein sequence ID" value="AT5G27110.1"/>
    <property type="gene ID" value="AT5G27110"/>
</dbReference>
<dbReference type="KEGG" id="ath:AT5G27110"/>
<dbReference type="Araport" id="AT5G27110"/>
<dbReference type="TAIR" id="AT5G27110"/>
<dbReference type="eggNOG" id="KOG4197">
    <property type="taxonomic scope" value="Eukaryota"/>
</dbReference>
<dbReference type="HOGENOM" id="CLU_002706_15_10_1"/>
<dbReference type="InParanoid" id="O04659"/>
<dbReference type="OMA" id="WNGLMAA"/>
<dbReference type="PhylomeDB" id="O04659"/>
<dbReference type="PRO" id="PR:O04659"/>
<dbReference type="Proteomes" id="UP000006548">
    <property type="component" value="Chromosome 5"/>
</dbReference>
<dbReference type="ExpressionAtlas" id="O04659">
    <property type="expression patterns" value="baseline and differential"/>
</dbReference>
<dbReference type="GO" id="GO:0003723">
    <property type="term" value="F:RNA binding"/>
    <property type="evidence" value="ECO:0007669"/>
    <property type="project" value="InterPro"/>
</dbReference>
<dbReference type="GO" id="GO:0009451">
    <property type="term" value="P:RNA modification"/>
    <property type="evidence" value="ECO:0007669"/>
    <property type="project" value="InterPro"/>
</dbReference>
<dbReference type="FunFam" id="1.25.40.10:FF:000284">
    <property type="entry name" value="Pentatricopeptide repeat-containing protein"/>
    <property type="match status" value="1"/>
</dbReference>
<dbReference type="FunFam" id="1.25.40.10:FF:000158">
    <property type="entry name" value="pentatricopeptide repeat-containing protein At2g33680"/>
    <property type="match status" value="1"/>
</dbReference>
<dbReference type="FunFam" id="1.25.40.10:FF:001322">
    <property type="entry name" value="Pentatricopeptide repeat-containing protein At3g16610"/>
    <property type="match status" value="1"/>
</dbReference>
<dbReference type="FunFam" id="1.25.40.10:FF:000073">
    <property type="entry name" value="Pentatricopeptide repeat-containing protein chloroplastic"/>
    <property type="match status" value="1"/>
</dbReference>
<dbReference type="FunFam" id="1.25.40.10:FF:000361">
    <property type="entry name" value="Pentatricopeptide repeat-containing protein chloroplastic"/>
    <property type="match status" value="1"/>
</dbReference>
<dbReference type="Gene3D" id="1.25.40.10">
    <property type="entry name" value="Tetratricopeptide repeat domain"/>
    <property type="match status" value="5"/>
</dbReference>
<dbReference type="InterPro" id="IPR046848">
    <property type="entry name" value="E_motif"/>
</dbReference>
<dbReference type="InterPro" id="IPR002885">
    <property type="entry name" value="Pentatricopeptide_rpt"/>
</dbReference>
<dbReference type="InterPro" id="IPR046960">
    <property type="entry name" value="PPR_At4g14850-like_plant"/>
</dbReference>
<dbReference type="InterPro" id="IPR011990">
    <property type="entry name" value="TPR-like_helical_dom_sf"/>
</dbReference>
<dbReference type="NCBIfam" id="TIGR00756">
    <property type="entry name" value="PPR"/>
    <property type="match status" value="6"/>
</dbReference>
<dbReference type="PANTHER" id="PTHR47926">
    <property type="entry name" value="PENTATRICOPEPTIDE REPEAT-CONTAINING PROTEIN"/>
    <property type="match status" value="1"/>
</dbReference>
<dbReference type="PANTHER" id="PTHR47926:SF452">
    <property type="entry name" value="PENTATRICOPEPTIDE REPEAT-CONTAINING PROTEIN"/>
    <property type="match status" value="1"/>
</dbReference>
<dbReference type="Pfam" id="PF20431">
    <property type="entry name" value="E_motif"/>
    <property type="match status" value="1"/>
</dbReference>
<dbReference type="Pfam" id="PF01535">
    <property type="entry name" value="PPR"/>
    <property type="match status" value="3"/>
</dbReference>
<dbReference type="Pfam" id="PF13041">
    <property type="entry name" value="PPR_2"/>
    <property type="match status" value="4"/>
</dbReference>
<dbReference type="PROSITE" id="PS51375">
    <property type="entry name" value="PPR"/>
    <property type="match status" value="16"/>
</dbReference>
<gene>
    <name type="primary">PCMP-E14</name>
    <name type="ordered locus">At5g27110</name>
    <name type="ORF">A_TM021B04.2</name>
    <name type="ORF">T21B4.20</name>
</gene>
<name>PP398_ARATH</name>